<keyword id="KW-1003">Cell membrane</keyword>
<keyword id="KW-0472">Membrane</keyword>
<keyword id="KW-0653">Protein transport</keyword>
<keyword id="KW-1185">Reference proteome</keyword>
<keyword id="KW-0811">Translocation</keyword>
<keyword id="KW-0812">Transmembrane</keyword>
<keyword id="KW-1133">Transmembrane helix</keyword>
<keyword id="KW-0813">Transport</keyword>
<sequence length="457" mass="49901">MGVIDVLAAVGERFPAVRKPERKPTLYRRLAWTGVILVLYFIMSNIPLYGIPPQNIGGQVDLQRIIFASSAGTLMELGIGPIVTASLIIQVLVGAKIIKLDLADPEGRRKFTSAQKVLALAFAALEAVAFTVGGRYWVGTAIEPGPLDYALVSLQLFLGALLVIYFDEVMQKGWGIGSAISLFILAGVAQGVVWSIFGTIPGVAQDYGLVPAIISNPDLTLLARPNGFPDLTGFFTTLAAIILLVYLQAMRVEIPITSERFKGIRSRVPLQFIYVTNIPILLVGILVSDLLLVQRLLADYLGVESRAYQIYSSIVYYLSPPRGVVQSIADPVKTAVFIASWTVLSIVFGYMWVEIAGLNPREQAERLIKGGLAIPGMRSDPRVLERVLRRYIYPLTFLSSLIVAALVIVADIFGAYGTGTGLLLAVGIINQYYAMITRERALETYPLLRRILGEEVV</sequence>
<accession>Q9YDD0</accession>
<dbReference type="EMBL" id="BA000002">
    <property type="protein sequence ID" value="BAA79967.2"/>
    <property type="molecule type" value="Genomic_DNA"/>
</dbReference>
<dbReference type="PIR" id="G72695">
    <property type="entry name" value="G72695"/>
</dbReference>
<dbReference type="RefSeq" id="WP_010866115.1">
    <property type="nucleotide sequence ID" value="NC_000854.2"/>
</dbReference>
<dbReference type="SMR" id="Q9YDD0"/>
<dbReference type="STRING" id="272557.APE_0983.1"/>
<dbReference type="EnsemblBacteria" id="BAA79967">
    <property type="protein sequence ID" value="BAA79967"/>
    <property type="gene ID" value="APE_0983.1"/>
</dbReference>
<dbReference type="GeneID" id="1445052"/>
<dbReference type="KEGG" id="ape:APE_0983.1"/>
<dbReference type="PATRIC" id="fig|272557.25.peg.711"/>
<dbReference type="eggNOG" id="arCOG04169">
    <property type="taxonomic scope" value="Archaea"/>
</dbReference>
<dbReference type="Proteomes" id="UP000002518">
    <property type="component" value="Chromosome"/>
</dbReference>
<dbReference type="GO" id="GO:0005886">
    <property type="term" value="C:plasma membrane"/>
    <property type="evidence" value="ECO:0007669"/>
    <property type="project" value="UniProtKB-SubCell"/>
</dbReference>
<dbReference type="GO" id="GO:0065002">
    <property type="term" value="P:intracellular protein transmembrane transport"/>
    <property type="evidence" value="ECO:0007669"/>
    <property type="project" value="UniProtKB-UniRule"/>
</dbReference>
<dbReference type="GO" id="GO:0006605">
    <property type="term" value="P:protein targeting"/>
    <property type="evidence" value="ECO:0007669"/>
    <property type="project" value="UniProtKB-UniRule"/>
</dbReference>
<dbReference type="Gene3D" id="1.10.3370.10">
    <property type="entry name" value="SecY subunit domain"/>
    <property type="match status" value="1"/>
</dbReference>
<dbReference type="HAMAP" id="MF_01465">
    <property type="entry name" value="SecY"/>
    <property type="match status" value="1"/>
</dbReference>
<dbReference type="InterPro" id="IPR026593">
    <property type="entry name" value="SecY"/>
</dbReference>
<dbReference type="InterPro" id="IPR002208">
    <property type="entry name" value="SecY/SEC61-alpha"/>
</dbReference>
<dbReference type="InterPro" id="IPR030659">
    <property type="entry name" value="SecY_CS"/>
</dbReference>
<dbReference type="InterPro" id="IPR023201">
    <property type="entry name" value="SecY_dom_sf"/>
</dbReference>
<dbReference type="InterPro" id="IPR019561">
    <property type="entry name" value="Translocon_Sec61/SecY_plug_dom"/>
</dbReference>
<dbReference type="NCBIfam" id="TIGR00967">
    <property type="entry name" value="3a0501s007"/>
    <property type="match status" value="1"/>
</dbReference>
<dbReference type="NCBIfam" id="NF006341">
    <property type="entry name" value="PRK08568.1-5"/>
    <property type="match status" value="1"/>
</dbReference>
<dbReference type="PANTHER" id="PTHR10906">
    <property type="entry name" value="SECY/SEC61-ALPHA FAMILY MEMBER"/>
    <property type="match status" value="1"/>
</dbReference>
<dbReference type="Pfam" id="PF10559">
    <property type="entry name" value="Plug_translocon"/>
    <property type="match status" value="1"/>
</dbReference>
<dbReference type="Pfam" id="PF00344">
    <property type="entry name" value="SecY"/>
    <property type="match status" value="1"/>
</dbReference>
<dbReference type="PIRSF" id="PIRSF004557">
    <property type="entry name" value="SecY"/>
    <property type="match status" value="1"/>
</dbReference>
<dbReference type="PRINTS" id="PR00303">
    <property type="entry name" value="SECYTRNLCASE"/>
</dbReference>
<dbReference type="SUPFAM" id="SSF103491">
    <property type="entry name" value="Preprotein translocase SecY subunit"/>
    <property type="match status" value="1"/>
</dbReference>
<dbReference type="PROSITE" id="PS00755">
    <property type="entry name" value="SECY_1"/>
    <property type="match status" value="1"/>
</dbReference>
<name>SECY_AERPE</name>
<proteinExistence type="inferred from homology"/>
<protein>
    <recommendedName>
        <fullName evidence="2">Protein translocase subunit SecY</fullName>
    </recommendedName>
    <alternativeName>
        <fullName evidence="2">Protein transport protein SEC61 subunit alpha homolog</fullName>
    </alternativeName>
</protein>
<feature type="chain" id="PRO_0000131759" description="Protein translocase subunit SecY">
    <location>
        <begin position="1"/>
        <end position="457"/>
    </location>
</feature>
<feature type="topological domain" description="Cytoplasmic" evidence="1">
    <location>
        <begin position="1"/>
        <end position="20"/>
    </location>
</feature>
<feature type="transmembrane region" description="Helical; Name=Helix 1" evidence="2">
    <location>
        <begin position="21"/>
        <end position="47"/>
    </location>
</feature>
<feature type="topological domain" description="Extracellular" evidence="1">
    <location>
        <begin position="48"/>
        <end position="59"/>
    </location>
</feature>
<feature type="transmembrane region" description="Discontinuously helical; Name=Helix 2" evidence="1">
    <location>
        <begin position="60"/>
        <end position="88"/>
    </location>
</feature>
<feature type="intramembrane region" description="Helical; Name=Helix 2A" evidence="1">
    <location>
        <begin position="60"/>
        <end position="67"/>
    </location>
</feature>
<feature type="intramembrane region" evidence="1">
    <location>
        <begin position="68"/>
        <end position="79"/>
    </location>
</feature>
<feature type="intramembrane region" description="Helical; Name=Helix 2B" evidence="1">
    <location>
        <begin position="80"/>
        <end position="88"/>
    </location>
</feature>
<feature type="topological domain" description="Cytoplasmic" evidence="1">
    <location>
        <begin position="89"/>
        <end position="109"/>
    </location>
</feature>
<feature type="transmembrane region" description="Helical; Name=Helix 3" evidence="2">
    <location>
        <begin position="110"/>
        <end position="134"/>
    </location>
</feature>
<feature type="topological domain" description="Extracellular" evidence="1">
    <location>
        <begin position="135"/>
        <end position="146"/>
    </location>
</feature>
<feature type="transmembrane region" description="Helical; Name=Helix 4" evidence="2">
    <location>
        <begin position="147"/>
        <end position="171"/>
    </location>
</feature>
<feature type="topological domain" description="Cytoplasmic" evidence="1">
    <location>
        <begin position="172"/>
        <end position="178"/>
    </location>
</feature>
<feature type="transmembrane region" description="Helical; Name=Helix 5" evidence="2">
    <location>
        <begin position="179"/>
        <end position="197"/>
    </location>
</feature>
<feature type="topological domain" description="Extracellular" evidence="1">
    <location>
        <begin position="198"/>
        <end position="229"/>
    </location>
</feature>
<feature type="transmembrane region" description="Helical; Name=Helix 6" evidence="2">
    <location>
        <begin position="230"/>
        <end position="251"/>
    </location>
</feature>
<feature type="topological domain" description="Cytoplasmic" evidence="1">
    <location>
        <begin position="252"/>
        <end position="276"/>
    </location>
</feature>
<feature type="transmembrane region" description="Helical; Name=Helix 7" evidence="2">
    <location>
        <begin position="277"/>
        <end position="298"/>
    </location>
</feature>
<feature type="topological domain" description="Extracellular" evidence="1">
    <location>
        <begin position="299"/>
        <end position="332"/>
    </location>
</feature>
<feature type="transmembrane region" description="Helical; Name=Helix 8" evidence="2">
    <location>
        <begin position="333"/>
        <end position="352"/>
    </location>
</feature>
<feature type="topological domain" description="Cytoplasmic" evidence="1">
    <location>
        <begin position="353"/>
        <end position="395"/>
    </location>
</feature>
<feature type="transmembrane region" description="Helical; Name=Helix 9" evidence="2">
    <location>
        <begin position="396"/>
        <end position="414"/>
    </location>
</feature>
<feature type="topological domain" description="Extracellular" evidence="1">
    <location>
        <begin position="415"/>
        <end position="417"/>
    </location>
</feature>
<feature type="transmembrane region" description="Helical; Name=Helix 10" evidence="2">
    <location>
        <begin position="418"/>
        <end position="432"/>
    </location>
</feature>
<feature type="topological domain" description="Cytoplasmic" evidence="1">
    <location>
        <begin position="433"/>
        <end position="457"/>
    </location>
</feature>
<comment type="function">
    <text evidence="2">The central subunit of the protein translocation channel SecYEG. Consists of two halves formed by TMs 1-5 and 6-10. These two domains form a lateral gate at the front which open onto the bilayer between TMs 2 and 7, and are clamped together by SecE at the back. The channel is closed by both a pore ring composed of hydrophobic SecY resides and a short helix (helix 2A) on the extracellular side of the membrane which forms a plug. The plug probably moves laterally to allow the channel to open. The ring and the pore may move independently.</text>
</comment>
<comment type="subunit">
    <text evidence="2">Component of the Sec protein translocase complex. Heterotrimer consisting of alpha (SecY), beta (SecG) and gamma (SecE) subunits. The heterotrimers can form oligomers, although 1 heterotrimer is thought to be able to translocate proteins. Interacts with the ribosome. May interact with SecDF, and other proteins may be involved.</text>
</comment>
<comment type="subcellular location">
    <subcellularLocation>
        <location evidence="2">Cell membrane</location>
        <topology evidence="2">Multi-pass membrane protein</topology>
    </subcellularLocation>
</comment>
<comment type="similarity">
    <text evidence="2">Belongs to the SecY/SEC61-alpha family.</text>
</comment>
<evidence type="ECO:0000250" key="1"/>
<evidence type="ECO:0000255" key="2">
    <source>
        <dbReference type="HAMAP-Rule" id="MF_01465"/>
    </source>
</evidence>
<organism>
    <name type="scientific">Aeropyrum pernix (strain ATCC 700893 / DSM 11879 / JCM 9820 / NBRC 100138 / K1)</name>
    <dbReference type="NCBI Taxonomy" id="272557"/>
    <lineage>
        <taxon>Archaea</taxon>
        <taxon>Thermoproteota</taxon>
        <taxon>Thermoprotei</taxon>
        <taxon>Desulfurococcales</taxon>
        <taxon>Desulfurococcaceae</taxon>
        <taxon>Aeropyrum</taxon>
    </lineage>
</organism>
<gene>
    <name evidence="2" type="primary">secY</name>
    <name type="ordered locus">APE_0983.1</name>
</gene>
<reference key="1">
    <citation type="journal article" date="1999" name="DNA Res.">
        <title>Complete genome sequence of an aerobic hyper-thermophilic crenarchaeon, Aeropyrum pernix K1.</title>
        <authorList>
            <person name="Kawarabayasi Y."/>
            <person name="Hino Y."/>
            <person name="Horikawa H."/>
            <person name="Yamazaki S."/>
            <person name="Haikawa Y."/>
            <person name="Jin-no K."/>
            <person name="Takahashi M."/>
            <person name="Sekine M."/>
            <person name="Baba S."/>
            <person name="Ankai A."/>
            <person name="Kosugi H."/>
            <person name="Hosoyama A."/>
            <person name="Fukui S."/>
            <person name="Nagai Y."/>
            <person name="Nishijima K."/>
            <person name="Nakazawa H."/>
            <person name="Takamiya M."/>
            <person name="Masuda S."/>
            <person name="Funahashi T."/>
            <person name="Tanaka T."/>
            <person name="Kudoh Y."/>
            <person name="Yamazaki J."/>
            <person name="Kushida N."/>
            <person name="Oguchi A."/>
            <person name="Aoki K."/>
            <person name="Kubota K."/>
            <person name="Nakamura Y."/>
            <person name="Nomura N."/>
            <person name="Sako Y."/>
            <person name="Kikuchi H."/>
        </authorList>
    </citation>
    <scope>NUCLEOTIDE SEQUENCE [LARGE SCALE GENOMIC DNA]</scope>
    <source>
        <strain>ATCC 700893 / DSM 11879 / JCM 9820 / NBRC 100138 / K1</strain>
    </source>
</reference>